<name>ATPI_ARAHI</name>
<sequence length="249" mass="27308">MNVLSCSINTLIKEGLYEISGVEVGQHFYWQIGGFQVHAQVLITSWVVIAILLGSAVLAVRNPQTIPTDGQNFFEFVLEFIRDVSQTQIGEEYGPWVPFIGTLFLFIFVSNWSGALLPWKIIQLPQGELAAPTNDINTTVALALLTSAAYFYAGLSKKGLGYFSKYIQPTPILLPINILEDFTKPLSLSFRLFGNILADELVVVVLVSLVPLVVPIPVMFLGLFTSGIQALIFATLAAAYIGESMEGHH</sequence>
<geneLocation type="chloroplast"/>
<proteinExistence type="inferred from homology"/>
<accession>A4QK06</accession>
<feature type="chain" id="PRO_0000362530" description="ATP synthase subunit a, chloroplastic">
    <location>
        <begin position="1"/>
        <end position="249"/>
    </location>
</feature>
<feature type="transmembrane region" description="Helical" evidence="1">
    <location>
        <begin position="40"/>
        <end position="60"/>
    </location>
</feature>
<feature type="transmembrane region" description="Helical" evidence="1">
    <location>
        <begin position="97"/>
        <end position="117"/>
    </location>
</feature>
<feature type="transmembrane region" description="Helical" evidence="1">
    <location>
        <begin position="136"/>
        <end position="156"/>
    </location>
</feature>
<feature type="transmembrane region" description="Helical" evidence="1">
    <location>
        <begin position="201"/>
        <end position="221"/>
    </location>
</feature>
<feature type="transmembrane region" description="Helical" evidence="1">
    <location>
        <begin position="222"/>
        <end position="242"/>
    </location>
</feature>
<comment type="function">
    <text evidence="1">Key component of the proton channel; it plays a direct role in the translocation of protons across the membrane.</text>
</comment>
<comment type="subunit">
    <text evidence="1">F-type ATPases have 2 components, CF(1) - the catalytic core - and CF(0) - the membrane proton channel. CF(1) has five subunits: alpha(3), beta(3), gamma(1), delta(1), epsilon(1). CF(0) has four main subunits: a, b, b' and c.</text>
</comment>
<comment type="subcellular location">
    <subcellularLocation>
        <location evidence="1">Plastid</location>
        <location evidence="1">Chloroplast thylakoid membrane</location>
        <topology evidence="1">Multi-pass membrane protein</topology>
    </subcellularLocation>
</comment>
<comment type="similarity">
    <text evidence="1">Belongs to the ATPase A chain family.</text>
</comment>
<protein>
    <recommendedName>
        <fullName evidence="1">ATP synthase subunit a, chloroplastic</fullName>
    </recommendedName>
    <alternativeName>
        <fullName evidence="1">ATP synthase F0 sector subunit a</fullName>
    </alternativeName>
    <alternativeName>
        <fullName evidence="1">F-ATPase subunit IV</fullName>
    </alternativeName>
</protein>
<gene>
    <name evidence="1" type="primary">atpI</name>
</gene>
<keyword id="KW-0066">ATP synthesis</keyword>
<keyword id="KW-0138">CF(0)</keyword>
<keyword id="KW-0150">Chloroplast</keyword>
<keyword id="KW-0375">Hydrogen ion transport</keyword>
<keyword id="KW-0406">Ion transport</keyword>
<keyword id="KW-0472">Membrane</keyword>
<keyword id="KW-0934">Plastid</keyword>
<keyword id="KW-0793">Thylakoid</keyword>
<keyword id="KW-0812">Transmembrane</keyword>
<keyword id="KW-1133">Transmembrane helix</keyword>
<keyword id="KW-0813">Transport</keyword>
<organism>
    <name type="scientific">Arabis hirsuta</name>
    <name type="common">Hairy rock-cress</name>
    <name type="synonym">Turritis hirsuta</name>
    <dbReference type="NCBI Taxonomy" id="78191"/>
    <lineage>
        <taxon>Eukaryota</taxon>
        <taxon>Viridiplantae</taxon>
        <taxon>Streptophyta</taxon>
        <taxon>Embryophyta</taxon>
        <taxon>Tracheophyta</taxon>
        <taxon>Spermatophyta</taxon>
        <taxon>Magnoliopsida</taxon>
        <taxon>eudicotyledons</taxon>
        <taxon>Gunneridae</taxon>
        <taxon>Pentapetalae</taxon>
        <taxon>rosids</taxon>
        <taxon>malvids</taxon>
        <taxon>Brassicales</taxon>
        <taxon>Brassicaceae</taxon>
        <taxon>Arabideae</taxon>
        <taxon>Arabis</taxon>
    </lineage>
</organism>
<dbReference type="EMBL" id="AP009369">
    <property type="protein sequence ID" value="BAF50011.1"/>
    <property type="molecule type" value="Genomic_DNA"/>
</dbReference>
<dbReference type="RefSeq" id="YP_001123187.1">
    <property type="nucleotide sequence ID" value="NC_009268.1"/>
</dbReference>
<dbReference type="SMR" id="A4QK06"/>
<dbReference type="GeneID" id="4962583"/>
<dbReference type="GO" id="GO:0009535">
    <property type="term" value="C:chloroplast thylakoid membrane"/>
    <property type="evidence" value="ECO:0007669"/>
    <property type="project" value="UniProtKB-SubCell"/>
</dbReference>
<dbReference type="GO" id="GO:0005886">
    <property type="term" value="C:plasma membrane"/>
    <property type="evidence" value="ECO:0007669"/>
    <property type="project" value="UniProtKB-UniRule"/>
</dbReference>
<dbReference type="GO" id="GO:0045259">
    <property type="term" value="C:proton-transporting ATP synthase complex"/>
    <property type="evidence" value="ECO:0007669"/>
    <property type="project" value="UniProtKB-KW"/>
</dbReference>
<dbReference type="GO" id="GO:0046933">
    <property type="term" value="F:proton-transporting ATP synthase activity, rotational mechanism"/>
    <property type="evidence" value="ECO:0007669"/>
    <property type="project" value="UniProtKB-UniRule"/>
</dbReference>
<dbReference type="CDD" id="cd00310">
    <property type="entry name" value="ATP-synt_Fo_a_6"/>
    <property type="match status" value="1"/>
</dbReference>
<dbReference type="FunFam" id="1.20.120.220:FF:000001">
    <property type="entry name" value="ATP synthase subunit a, chloroplastic"/>
    <property type="match status" value="1"/>
</dbReference>
<dbReference type="Gene3D" id="1.20.120.220">
    <property type="entry name" value="ATP synthase, F0 complex, subunit A"/>
    <property type="match status" value="1"/>
</dbReference>
<dbReference type="HAMAP" id="MF_01393">
    <property type="entry name" value="ATP_synth_a_bact"/>
    <property type="match status" value="1"/>
</dbReference>
<dbReference type="InterPro" id="IPR045082">
    <property type="entry name" value="ATP_syn_F0_a_bact/chloroplast"/>
</dbReference>
<dbReference type="InterPro" id="IPR000568">
    <property type="entry name" value="ATP_synth_F0_asu"/>
</dbReference>
<dbReference type="InterPro" id="IPR023011">
    <property type="entry name" value="ATP_synth_F0_asu_AS"/>
</dbReference>
<dbReference type="InterPro" id="IPR035908">
    <property type="entry name" value="F0_ATP_A_sf"/>
</dbReference>
<dbReference type="NCBIfam" id="TIGR01131">
    <property type="entry name" value="ATP_synt_6_or_A"/>
    <property type="match status" value="1"/>
</dbReference>
<dbReference type="PANTHER" id="PTHR42823">
    <property type="entry name" value="ATP SYNTHASE SUBUNIT A, CHLOROPLASTIC"/>
    <property type="match status" value="1"/>
</dbReference>
<dbReference type="PANTHER" id="PTHR42823:SF3">
    <property type="entry name" value="ATP SYNTHASE SUBUNIT A, CHLOROPLASTIC"/>
    <property type="match status" value="1"/>
</dbReference>
<dbReference type="Pfam" id="PF00119">
    <property type="entry name" value="ATP-synt_A"/>
    <property type="match status" value="1"/>
</dbReference>
<dbReference type="PRINTS" id="PR00123">
    <property type="entry name" value="ATPASEA"/>
</dbReference>
<dbReference type="SUPFAM" id="SSF81336">
    <property type="entry name" value="F1F0 ATP synthase subunit A"/>
    <property type="match status" value="1"/>
</dbReference>
<dbReference type="PROSITE" id="PS00449">
    <property type="entry name" value="ATPASE_A"/>
    <property type="match status" value="1"/>
</dbReference>
<evidence type="ECO:0000255" key="1">
    <source>
        <dbReference type="HAMAP-Rule" id="MF_01393"/>
    </source>
</evidence>
<reference key="1">
    <citation type="submission" date="2007-03" db="EMBL/GenBank/DDBJ databases">
        <title>Sequencing analysis of Arabis hirsuta chloroplast DNA.</title>
        <authorList>
            <person name="Hosouchi T."/>
            <person name="Tsuruoka H."/>
            <person name="Kotani H."/>
        </authorList>
    </citation>
    <scope>NUCLEOTIDE SEQUENCE [LARGE SCALE GENOMIC DNA]</scope>
</reference>